<reference key="1">
    <citation type="journal article" date="1992" name="Blood">
        <title>Mouse MRP8 and MRP14, two intracellular calcium-binding proteins associated with the development of the myeloid lineage.</title>
        <authorList>
            <person name="Lagasse E."/>
            <person name="Weissman I.L."/>
        </authorList>
    </citation>
    <scope>NUCLEOTIDE SEQUENCE [MRNA]</scope>
    <source>
        <strain>BALB/cJ</strain>
    </source>
</reference>
<reference key="2">
    <citation type="journal article" date="2001" name="J. Cell. Biochem.">
        <title>Molecular analysis of the mouse S100A9 gene and evidence that the myeloid specific transcription factor C/EBPepsilon is not required for the regulation of the S100A9/A8 gene expression in neutrophils.</title>
        <authorList>
            <person name="Nacken W.K.F."/>
            <person name="Lekstrom-Himes J.A."/>
            <person name="Sorg C."/>
            <person name="Manitz M."/>
        </authorList>
    </citation>
    <scope>NUCLEOTIDE SEQUENCE [GENOMIC DNA]</scope>
    <source>
        <strain>129/SvJ</strain>
    </source>
</reference>
<reference key="3">
    <citation type="journal article" date="2004" name="Genome Res.">
        <title>The status, quality, and expansion of the NIH full-length cDNA project: the Mammalian Gene Collection (MGC).</title>
        <authorList>
            <consortium name="The MGC Project Team"/>
        </authorList>
    </citation>
    <scope>NUCLEOTIDE SEQUENCE [LARGE SCALE MRNA]</scope>
    <source>
        <strain>C57BL/6J</strain>
        <tissue>Mammary gland</tissue>
    </source>
</reference>
<reference key="4">
    <citation type="journal article" date="1996" name="Biochem. J.">
        <title>Isolation of the murine S100 protein MRP14 (14 kDa migration-inhibitory-factor-related protein) from activated spleen cells: characterization of post-translational modifications and zinc binding.</title>
        <authorList>
            <person name="Raftery M.J."/>
            <person name="Harrison C.A."/>
            <person name="Alewood P.F."/>
            <person name="Jones A."/>
            <person name="Geczy C.L."/>
        </authorList>
    </citation>
    <scope>PROTEIN SEQUENCE OF 2-10; 76-93 AND 95-109</scope>
    <scope>CLEAVAGE OF INITIATOR METHIONINE</scope>
    <scope>ACETYLATION AT ALA-2</scope>
    <scope>MASS SPECTROMETRY</scope>
</reference>
<reference key="5">
    <citation type="journal article" date="2003" name="Mol. Cell. Biol.">
        <title>Loss of S100A9 (MRP14) results in reduced interleukin-8-induced CD11b surface expression, a polarized microfilament system, and diminished responsiveness to chemoattractants in vitro.</title>
        <authorList>
            <person name="Manitz M.-P."/>
            <person name="Horst B."/>
            <person name="Seeliger S."/>
            <person name="Strey A."/>
            <person name="Skryabin B.V."/>
            <person name="Gunzer M."/>
            <person name="Frings W."/>
            <person name="Schoenlau F."/>
            <person name="Roth J."/>
            <person name="Sorg C."/>
            <person name="Nacken W."/>
        </authorList>
    </citation>
    <scope>DISRUPTION PHENOTYPE</scope>
</reference>
<reference key="6">
    <citation type="journal article" date="2004" name="Blood">
        <title>MRP8 and MRP14 control microtubule reorganization during transendothelial migration of phagocytes.</title>
        <authorList>
            <person name="Vogl T."/>
            <person name="Ludwig S."/>
            <person name="Goebeler M."/>
            <person name="Strey A."/>
            <person name="Thorey I.S."/>
            <person name="Reichelt R."/>
            <person name="Foell D."/>
            <person name="Gerke V."/>
            <person name="Manitz M.P."/>
            <person name="Nacken W."/>
            <person name="Werner S."/>
            <person name="Sorg C."/>
            <person name="Roth J."/>
        </authorList>
    </citation>
    <scope>FUNCTION</scope>
    <scope>PHOSPHORYLATION</scope>
</reference>
<reference key="7">
    <citation type="journal article" date="2006" name="Mol. Cell. Proteomics">
        <title>Comprehensive identification of phosphorylation sites in postsynaptic density preparations.</title>
        <authorList>
            <person name="Trinidad J.C."/>
            <person name="Specht C.G."/>
            <person name="Thalhammer A."/>
            <person name="Schoepfer R."/>
            <person name="Burlingame A.L."/>
        </authorList>
    </citation>
    <scope>IDENTIFICATION BY MASS SPECTROMETRY [LARGE SCALE ANALYSIS]</scope>
    <source>
        <tissue>Brain</tissue>
    </source>
</reference>
<reference key="8">
    <citation type="journal article" date="2007" name="Nat. Med.">
        <title>Mrp8 and Mrp14 are endogenous activators of Toll-like receptor 4, promoting lethal, endotoxin-induced shock.</title>
        <authorList>
            <person name="Vogl T."/>
            <person name="Tenbrock K."/>
            <person name="Ludwig S."/>
            <person name="Leukert N."/>
            <person name="Ehrhardt C."/>
            <person name="van Zoelen M.A.D."/>
            <person name="Nacken W."/>
            <person name="Foell D."/>
            <person name="van der Poll T."/>
            <person name="Sorg C."/>
            <person name="Roth J."/>
        </authorList>
    </citation>
    <scope>DISRUPTION PHENOTYPE</scope>
    <scope>FUNCTION</scope>
    <scope>SUBCELLULAR LOCATION</scope>
    <scope>SUBUNIT</scope>
    <scope>INTERACTION WITH TLR4 AND LY96</scope>
</reference>
<reference key="9">
    <citation type="journal article" date="2008" name="Circ. Res.">
        <title>S100A8 and S100A9 mediate endotoxin-induced cardiomyocyte dysfunction via the receptor for advanced glycation end products.</title>
        <authorList>
            <person name="Boyd J.H."/>
            <person name="Kan B."/>
            <person name="Roberts H."/>
            <person name="Wang Y."/>
            <person name="Walley K.R."/>
        </authorList>
    </citation>
    <scope>FUNCTION</scope>
    <scope>INTERACTION WITH ATP2A2 AND AGER</scope>
</reference>
<reference key="10">
    <citation type="journal article" date="2009" name="Antiinflamm. Antiallergy Agents Med. Chem.">
        <title>Anti-infective protective properties of S100 calgranulins.</title>
        <authorList>
            <person name="Hsu K."/>
            <person name="Champaiboon C."/>
            <person name="Guenther B.D."/>
            <person name="Sorenson B.S."/>
            <person name="Khammanivong A."/>
            <person name="Ross K.F."/>
            <person name="Geczy C.L."/>
            <person name="Herzberg M.C."/>
        </authorList>
    </citation>
    <scope>REVIEW</scope>
</reference>
<reference key="11">
    <citation type="journal article" date="2009" name="PLoS Biol.">
        <title>Identification of human S100A9 as a novel target for treatment of autoimmune disease via binding to quinoline-3-carboxamides.</title>
        <authorList>
            <person name="Bjoerk P."/>
            <person name="Bjoerk A."/>
            <person name="Vogl T."/>
            <person name="Stenstroem M."/>
            <person name="Liberg D."/>
            <person name="Olsson A."/>
            <person name="Roth J."/>
            <person name="Ivars F."/>
            <person name="Leanderson T."/>
        </authorList>
    </citation>
    <scope>FUNCTION</scope>
    <scope>SUBCELLULAR LOCATION</scope>
    <scope>SUBUNIT</scope>
    <scope>INTERACTION WITH TLR4; LY96 AND AGER</scope>
    <scope>QUINOLINE-3-CARBOXAMIDE BINDING</scope>
</reference>
<reference key="12">
    <citation type="journal article" date="2010" name="Cell">
        <title>A tissue-specific atlas of mouse protein phosphorylation and expression.</title>
        <authorList>
            <person name="Huttlin E.L."/>
            <person name="Jedrychowski M.P."/>
            <person name="Elias J.E."/>
            <person name="Goswami T."/>
            <person name="Rad R."/>
            <person name="Beausoleil S.A."/>
            <person name="Villen J."/>
            <person name="Haas W."/>
            <person name="Sowa M.E."/>
            <person name="Gygi S.P."/>
        </authorList>
    </citation>
    <scope>IDENTIFICATION BY MASS SPECTROMETRY [LARGE SCALE ANALYSIS]</scope>
    <source>
        <tissue>Brown adipose tissue</tissue>
        <tissue>Liver</tissue>
        <tissue>Lung</tissue>
        <tissue>Spleen</tissue>
    </source>
</reference>
<reference key="13">
    <citation type="journal article" date="2011" name="Amino Acids">
        <title>Inflammation-associated S100 proteins: new mechanisms that regulate function.</title>
        <authorList>
            <person name="Goyette J."/>
            <person name="Geczy C.L."/>
        </authorList>
    </citation>
    <scope>REVIEW</scope>
</reference>
<reference key="14">
    <citation type="journal article" date="2011" name="Circulation">
        <title>S100A9 differentially modifies phenotypic states of neutrophils, macrophages, and dendritic cells: implications for atherosclerosis and adipose tissue inflammation.</title>
        <authorList>
            <person name="Averill M.M."/>
            <person name="Barnhart S."/>
            <person name="Becker L."/>
            <person name="Li X."/>
            <person name="Heinecke J.W."/>
            <person name="Leboeuf R.C."/>
            <person name="Hamerman J.A."/>
            <person name="Sorg C."/>
            <person name="Kerkhoff C."/>
            <person name="Bornfeldt K.E."/>
        </authorList>
    </citation>
    <scope>FUNCTION</scope>
</reference>
<reference key="15">
    <citation type="journal article" date="2012" name="Immunology">
        <title>Induction of nuclear factor-kappaB responses by the S100A9 protein is Toll-like receptor-4-dependent.</title>
        <authorList>
            <person name="Riva M."/>
            <person name="Kaellberg E."/>
            <person name="Bjoerk P."/>
            <person name="Hancz D."/>
            <person name="Vogl T."/>
            <person name="Roth J."/>
            <person name="Ivars F."/>
            <person name="Leanderson T."/>
        </authorList>
    </citation>
    <scope>FUNCTION</scope>
</reference>
<reference key="16">
    <citation type="journal article" date="2021" name="J. Biol. Chem.">
        <title>siRNA screening identifies METTL9 as a histidine Npi-methyltransferase that targets the proinflammatory protein S100A9.</title>
        <authorList>
            <person name="Daitoku H."/>
            <person name="Someya M."/>
            <person name="Kako K."/>
            <person name="Hayashi T."/>
            <person name="Tajima T."/>
            <person name="Haruki H."/>
            <person name="Sekiguchi N."/>
            <person name="Uetake T."/>
            <person name="Akimoto Y."/>
            <person name="Fukamizu A."/>
        </authorList>
    </citation>
    <scope>METHYLATION AT HIS-107</scope>
</reference>
<reference key="17">
    <citation type="journal article" date="2021" name="Nat. Commun.">
        <title>The methyltransferase METTL9 mediates pervasive 1-methylhistidine modification in mammalian proteomes.</title>
        <authorList>
            <person name="Davydova E."/>
            <person name="Shimazu T."/>
            <person name="Schuhmacher M.K."/>
            <person name="Jakobsson M.E."/>
            <person name="Willemen H.L.D.M."/>
            <person name="Liu T."/>
            <person name="Moen A."/>
            <person name="Ho A.Y.Y."/>
            <person name="Malecki J."/>
            <person name="Schroer L."/>
            <person name="Pinto R."/>
            <person name="Suzuki T."/>
            <person name="Groensberg I.A."/>
            <person name="Sohtome Y."/>
            <person name="Akakabe M."/>
            <person name="Weirich S."/>
            <person name="Kikuchi M."/>
            <person name="Olsen J.V."/>
            <person name="Dohmae N."/>
            <person name="Umehara T."/>
            <person name="Sodeoka M."/>
            <person name="Siino V."/>
            <person name="McDonough M.A."/>
            <person name="Eijkelkamp N."/>
            <person name="Schofield C.J."/>
            <person name="Jeltsch A."/>
            <person name="Shinkai Y."/>
            <person name="Falnes P.O."/>
        </authorList>
    </citation>
    <scope>METHYLATION AT HIS-107</scope>
    <scope>MUTAGENESIS OF HIS-103; HIS-105 AND HIS-107</scope>
</reference>
<reference evidence="14" key="18">
    <citation type="journal article" date="2023" name="Cell Discov.">
        <title>Molecular basis for METTL9-mediated N1-histidine methylation.</title>
        <authorList>
            <person name="Wang X."/>
            <person name="Xie H."/>
            <person name="Guo Q."/>
            <person name="Cao D."/>
            <person name="Ru W."/>
            <person name="Zhao S."/>
            <person name="Zhu Z."/>
            <person name="Zhang J."/>
            <person name="Pan W."/>
            <person name="Yao X."/>
            <person name="Xu C."/>
        </authorList>
    </citation>
    <scope>X-RAY CRYSTALLOGRAPHY (1.69 ANGSTROMS) OF 101-110 IN COMPLEX WITH METTL9</scope>
</reference>
<keyword id="KW-0002">3D-structure</keyword>
<keyword id="KW-0007">Acetylation</keyword>
<keyword id="KW-0929">Antimicrobial</keyword>
<keyword id="KW-0049">Antioxidant</keyword>
<keyword id="KW-0053">Apoptosis</keyword>
<keyword id="KW-0072">Autophagy</keyword>
<keyword id="KW-0106">Calcium</keyword>
<keyword id="KW-1003">Cell membrane</keyword>
<keyword id="KW-0145">Chemotaxis</keyword>
<keyword id="KW-0963">Cytoplasm</keyword>
<keyword id="KW-0206">Cytoskeleton</keyword>
<keyword id="KW-0903">Direct protein sequencing</keyword>
<keyword id="KW-0391">Immunity</keyword>
<keyword id="KW-0395">Inflammatory response</keyword>
<keyword id="KW-0399">Innate immunity</keyword>
<keyword id="KW-0472">Membrane</keyword>
<keyword id="KW-0479">Metal-binding</keyword>
<keyword id="KW-0488">Methylation</keyword>
<keyword id="KW-0597">Phosphoprotein</keyword>
<keyword id="KW-1185">Reference proteome</keyword>
<keyword id="KW-0677">Repeat</keyword>
<keyword id="KW-0964">Secreted</keyword>
<keyword id="KW-0862">Zinc</keyword>
<proteinExistence type="evidence at protein level"/>
<accession>P31725</accession>
<comment type="function">
    <text evidence="1 4 5 6 7 8 9 11">S100A9 is a calcium- and zinc-binding protein which plays a prominent role in the regulation of inflammatory processes and immune response (PubMed:15331440, PubMed:17767165, PubMed:18403730, PubMed:19402754, PubMed:22804476, PubMed:34562450). It can induce neutrophil chemotaxis, adhesion, can increase the bactericidal activity of neutrophils by promoting phagocytosis via activation of SYK, PI3K/AKT, and ERK1/2 and can induce degranulation of neutrophils by a MAPK-dependent mechanism (By similarity). Predominantly found as calprotectin (S100A8/A9) which has a wide plethora of intra- and extracellular functions (By similarity). The intracellular functions include: facilitating leukocyte arachidonic acid trafficking and metabolism, modulation of the tubulin-dependent cytoskeleton during migration of phagocytes and activation of the neutrophilic NADPH-oxidase (PubMed:15331440). Also participates in regulatory T-cell differentiation together with CD69 (By similarity). Activates NADPH-oxidase by facilitating the enzyme complex assembly at the cell membrane, transferring arachidonic acid, an essential cofactor, to the enzyme complex and S100A8 contributes to the enzyme assembly by directly binding to NCF2/P67PHOX (By similarity). The extracellular functions involve pro-inflammatory, antimicrobial, oxidant-scavenging and apoptosis-inducing activities (PubMed:21382888). Its pro-inflammatory activity includes recruitment of leukocytes, promotion of cytokine and chemokine production, and regulation of leukocyte adhesion and migration (By similarity). Acts as an alarmin or a danger associated molecular pattern (DAMP) molecule and stimulates innate immune cells via binding to pattern recognition receptors such as Toll-like receptor 4 (TLR4) and receptor for advanced glycation endproducts (AGER) (PubMed:17767165, PubMed:18403730, PubMed:19402754). Binding to TLR4 and AGER activates the MAP-kinase and NF-kappa-B signaling pathways resulting in the amplification of the pro-inflammatory cascade (PubMed:17767165, PubMed:18403730, PubMed:19402754, PubMed:22804476). Has antimicrobial activity towards bacteria and fungi and exerts its antimicrobial activity probably via chelation of Zn(2+) which is essential for microbial growth (By similarity). Can induce cell death via autophagy and apoptosis and this occurs through the cross-talk of mitochondria and lysosomes via reactive oxygen species (ROS) and the process involves BNIP3 (By similarity). Can regulate neutrophil number and apoptosis by an anti-apoptotic effect; regulates cell survival via ITGAM/ITGB and TLR4 and a signaling mechanism involving MEK-ERK (By similarity). Its role as an oxidant scavenger has a protective role in preventing exaggerated tissue damage by scavenging oxidants (By similarity). The iNOS-S100A8/A9 transnitrosylase complex is proposed to direct selective inflammatory stimulus-dependent S-nitrosylation of multiple targets such as GAPDH, NXA5, EZR, MSN and VIM by recognizing a [IL]-x-C-x-x-[DE] motif (By similarity).</text>
</comment>
<comment type="subunit">
    <text evidence="1 5 6 7 11">Homodimer. Preferentially exists as a heterodimer or heterotetramer with S100A8 known as calprotectin (S100A8/A9) (PubMed:34562450). S100A9 interacts with ATP2A2 (PubMed:18403730). S100A9 interacts with AGER, and with the heterodimeric complex formed by TLR4 and LY96 in the presence of calcium and/or zinc ions (PubMed:17767165, PubMed:18403730, PubMed:19402754). S100A9 binds quinoline-3-carboxamides in the presence of calcium and/or zinc ions. S100A9 interacts with amyloid-beta protein 40. Calprotectin (S100A8/9) interacts with CEACAM3 and tubulin filaments in a calcium-dependent manner. Heterotetrameric calprotectin (S100A8/A9) interacts with ANXA6 and associates with tubulin filaments in activated monocytes. Calprotectin (S100A8/9) interacts with NCF2/P67PHOX, RAC1, RAC2, CYBA and CYBB. Calprotectin (S100A8/9) interacts with NOS2 to form the iNOS-S100A8/A9 transnitrosylase complex; induced by LDL(ox) (By similarity). Calprotectin (S100A8/9) interacts with CD69 (By similarity).</text>
</comment>
<comment type="subcellular location">
    <subcellularLocation>
        <location evidence="1">Secreted</location>
    </subcellularLocation>
    <subcellularLocation>
        <location evidence="1">Cytoplasm</location>
    </subcellularLocation>
    <subcellularLocation>
        <location evidence="1">Cytoplasm</location>
        <location evidence="1">Cytoskeleton</location>
    </subcellularLocation>
    <subcellularLocation>
        <location evidence="1">Cell membrane</location>
        <topology evidence="1">Peripheral membrane protein</topology>
    </subcellularLocation>
    <text evidence="1">Predominantly localized in the cytoplasm. Upon elevation of the intracellular calcium level, translocated from the cytoplasm to the cytoskeleton and the cell membrane. Upon neutrophil activation or endothelial adhesion of monocytes, is secreted via a microtubule-mediated, alternative pathway.</text>
</comment>
<comment type="PTM">
    <text evidence="1">Phosphorylated. Phosphorylation inhibits activation of tubulin polymerization.</text>
</comment>
<comment type="PTM">
    <text evidence="10 11">Methylation at His-107 by METTL9 reduces zinc-binding without affecting heterodimerization with S100A8.</text>
</comment>
<comment type="mass spectrometry"/>
<comment type="disruption phenotype">
    <text evidence="3 5">No visible phenotype. Alters response of phagocytes to stimulation with bacterial lipopolysaccharide (LPS).</text>
</comment>
<comment type="similarity">
    <text evidence="13">Belongs to the S-100 family.</text>
</comment>
<gene>
    <name type="primary">S100a9</name>
    <name type="synonym">Cagb</name>
    <name type="synonym">Mrp14</name>
</gene>
<feature type="initiator methionine" description="Removed" evidence="12">
    <location>
        <position position="1"/>
    </location>
</feature>
<feature type="chain" id="PRO_0000143998" description="Protein S100-A9">
    <location>
        <begin position="2"/>
        <end position="113"/>
    </location>
</feature>
<feature type="domain" description="EF-hand 1" evidence="2">
    <location>
        <begin position="13"/>
        <end position="48"/>
    </location>
</feature>
<feature type="domain" description="EF-hand 2" evidence="2">
    <location>
        <begin position="55"/>
        <end position="90"/>
    </location>
</feature>
<feature type="binding site" evidence="1">
    <location>
        <position position="21"/>
    </location>
    <ligand>
        <name>Zn(2+)</name>
        <dbReference type="ChEBI" id="CHEBI:29105"/>
    </ligand>
</feature>
<feature type="binding site" evidence="1">
    <location>
        <position position="24"/>
    </location>
    <ligand>
        <name>Ca(2+)</name>
        <dbReference type="ChEBI" id="CHEBI:29108"/>
        <label>1</label>
        <note>low affinity</note>
    </ligand>
</feature>
<feature type="binding site" evidence="1">
    <location>
        <position position="29"/>
    </location>
    <ligand>
        <name>Ca(2+)</name>
        <dbReference type="ChEBI" id="CHEBI:29108"/>
        <label>1</label>
        <note>low affinity</note>
    </ligand>
</feature>
<feature type="binding site" evidence="1">
    <location>
        <position position="31"/>
    </location>
    <ligand>
        <name>Zn(2+)</name>
        <dbReference type="ChEBI" id="CHEBI:29105"/>
    </ligand>
</feature>
<feature type="binding site" evidence="1">
    <location>
        <position position="32"/>
    </location>
    <ligand>
        <name>Ca(2+)</name>
        <dbReference type="ChEBI" id="CHEBI:29108"/>
        <label>1</label>
        <note>low affinity</note>
    </ligand>
</feature>
<feature type="binding site" evidence="1">
    <location>
        <position position="37"/>
    </location>
    <ligand>
        <name>Ca(2+)</name>
        <dbReference type="ChEBI" id="CHEBI:29108"/>
        <label>1</label>
        <note>low affinity</note>
    </ligand>
</feature>
<feature type="binding site" evidence="1">
    <location>
        <position position="68"/>
    </location>
    <ligand>
        <name>Ca(2+)</name>
        <dbReference type="ChEBI" id="CHEBI:29108"/>
        <label>2</label>
        <note>high affinity</note>
    </ligand>
</feature>
<feature type="binding site" evidence="1">
    <location>
        <position position="70"/>
    </location>
    <ligand>
        <name>Ca(2+)</name>
        <dbReference type="ChEBI" id="CHEBI:29108"/>
        <label>2</label>
        <note>high affinity</note>
    </ligand>
</feature>
<feature type="binding site" evidence="1">
    <location>
        <position position="72"/>
    </location>
    <ligand>
        <name>Ca(2+)</name>
        <dbReference type="ChEBI" id="CHEBI:29108"/>
        <label>2</label>
        <note>high affinity</note>
    </ligand>
</feature>
<feature type="binding site" evidence="1">
    <location>
        <position position="74"/>
    </location>
    <ligand>
        <name>Ca(2+)</name>
        <dbReference type="ChEBI" id="CHEBI:29108"/>
        <label>2</label>
        <note>high affinity</note>
    </ligand>
</feature>
<feature type="binding site" evidence="1">
    <location>
        <position position="79"/>
    </location>
    <ligand>
        <name>Ca(2+)</name>
        <dbReference type="ChEBI" id="CHEBI:29108"/>
        <label>2</label>
        <note>high affinity</note>
    </ligand>
</feature>
<feature type="binding site" evidence="1">
    <location>
        <position position="92"/>
    </location>
    <ligand>
        <name>Zn(2+)</name>
        <dbReference type="ChEBI" id="CHEBI:29105"/>
    </ligand>
</feature>
<feature type="binding site" evidence="1">
    <location>
        <position position="96"/>
    </location>
    <ligand>
        <name>Zn(2+)</name>
        <dbReference type="ChEBI" id="CHEBI:29105"/>
    </ligand>
</feature>
<feature type="modified residue" description="N-acetylalanine" evidence="12">
    <location>
        <position position="2"/>
    </location>
</feature>
<feature type="modified residue" description="Pros-methylhistidine" evidence="10 11">
    <location>
        <position position="107"/>
    </location>
</feature>
<feature type="mutagenesis site" description="Reduced histidine methylation by METTL9." evidence="10">
    <original>H</original>
    <variation>A</variation>
    <location>
        <position position="103"/>
    </location>
</feature>
<feature type="mutagenesis site" description="Reduced histidine methylation by METTL9." evidence="10">
    <original>H</original>
    <variation>A</variation>
    <location>
        <position position="105"/>
    </location>
</feature>
<feature type="mutagenesis site" description="Reduced histidine methylation by METTL9." evidence="10 11">
    <original>H</original>
    <variation>A</variation>
    <variation>F</variation>
    <location>
        <position position="107"/>
    </location>
</feature>
<feature type="helix" evidence="15">
    <location>
        <begin position="8"/>
        <end position="24"/>
    </location>
</feature>
<feature type="strand" evidence="15">
    <location>
        <begin position="26"/>
        <end position="29"/>
    </location>
</feature>
<feature type="helix" evidence="15">
    <location>
        <begin position="35"/>
        <end position="45"/>
    </location>
</feature>
<feature type="turn" evidence="15">
    <location>
        <begin position="47"/>
        <end position="50"/>
    </location>
</feature>
<feature type="helix" evidence="15">
    <location>
        <begin position="51"/>
        <end position="54"/>
    </location>
</feature>
<feature type="helix" evidence="15">
    <location>
        <begin position="57"/>
        <end position="67"/>
    </location>
</feature>
<feature type="strand" evidence="15">
    <location>
        <begin position="72"/>
        <end position="75"/>
    </location>
</feature>
<feature type="helix" evidence="15">
    <location>
        <begin position="77"/>
        <end position="98"/>
    </location>
</feature>
<feature type="strand" evidence="15">
    <location>
        <begin position="101"/>
        <end position="105"/>
    </location>
</feature>
<organism>
    <name type="scientific">Mus musculus</name>
    <name type="common">Mouse</name>
    <dbReference type="NCBI Taxonomy" id="10090"/>
    <lineage>
        <taxon>Eukaryota</taxon>
        <taxon>Metazoa</taxon>
        <taxon>Chordata</taxon>
        <taxon>Craniata</taxon>
        <taxon>Vertebrata</taxon>
        <taxon>Euteleostomi</taxon>
        <taxon>Mammalia</taxon>
        <taxon>Eutheria</taxon>
        <taxon>Euarchontoglires</taxon>
        <taxon>Glires</taxon>
        <taxon>Rodentia</taxon>
        <taxon>Myomorpha</taxon>
        <taxon>Muroidea</taxon>
        <taxon>Muridae</taxon>
        <taxon>Murinae</taxon>
        <taxon>Mus</taxon>
        <taxon>Mus</taxon>
    </lineage>
</organism>
<dbReference type="EMBL" id="M83219">
    <property type="protein sequence ID" value="AAB07228.1"/>
    <property type="molecule type" value="mRNA"/>
</dbReference>
<dbReference type="EMBL" id="AJ250496">
    <property type="protein sequence ID" value="CAC14292.1"/>
    <property type="molecule type" value="Genomic_DNA"/>
</dbReference>
<dbReference type="EMBL" id="BC027635">
    <property type="protein sequence ID" value="AAH27635.1"/>
    <property type="molecule type" value="mRNA"/>
</dbReference>
<dbReference type="CCDS" id="CCDS17543.1"/>
<dbReference type="PIR" id="S68242">
    <property type="entry name" value="S68242"/>
</dbReference>
<dbReference type="RefSeq" id="NP_001268781.1">
    <property type="nucleotide sequence ID" value="NM_001281852.1"/>
</dbReference>
<dbReference type="RefSeq" id="NP_033140.1">
    <property type="nucleotide sequence ID" value="NM_009114.3"/>
</dbReference>
<dbReference type="PDB" id="6ZDY">
    <property type="method" value="X-ray"/>
    <property type="resolution" value="1.45 A"/>
    <property type="chains" value="A=1-113"/>
</dbReference>
<dbReference type="PDB" id="6ZFE">
    <property type="method" value="X-ray"/>
    <property type="resolution" value="2.35 A"/>
    <property type="chains" value="A=1-113"/>
</dbReference>
<dbReference type="PDB" id="7YF3">
    <property type="method" value="X-ray"/>
    <property type="resolution" value="3.43 A"/>
    <property type="chains" value="C/D=101-110"/>
</dbReference>
<dbReference type="PDBsum" id="6ZDY"/>
<dbReference type="PDBsum" id="6ZFE"/>
<dbReference type="PDBsum" id="7YF3"/>
<dbReference type="SMR" id="P31725"/>
<dbReference type="BioGRID" id="203057">
    <property type="interactions" value="9"/>
</dbReference>
<dbReference type="ComplexPortal" id="CPX-40">
    <property type="entry name" value="Calprotectin heterotetramer"/>
</dbReference>
<dbReference type="ComplexPortal" id="CPX-41">
    <property type="entry name" value="Calprotectin heterodimer"/>
</dbReference>
<dbReference type="ComplexPortal" id="CPX-49">
    <property type="entry name" value="S100A9 complex"/>
</dbReference>
<dbReference type="ComplexPortal" id="CPX-53">
    <property type="entry name" value="iNOS-S100A8/A9 complex"/>
</dbReference>
<dbReference type="FunCoup" id="P31725">
    <property type="interactions" value="241"/>
</dbReference>
<dbReference type="IntAct" id="P31725">
    <property type="interactions" value="1"/>
</dbReference>
<dbReference type="STRING" id="10090.ENSMUSP00000112843"/>
<dbReference type="MoonProt" id="P31725"/>
<dbReference type="iPTMnet" id="P31725"/>
<dbReference type="PhosphoSitePlus" id="P31725"/>
<dbReference type="CPTAC" id="non-CPTAC-3410"/>
<dbReference type="jPOST" id="P31725"/>
<dbReference type="PaxDb" id="10090-ENSMUSP00000112843"/>
<dbReference type="PeptideAtlas" id="P31725"/>
<dbReference type="ProteomicsDB" id="253331"/>
<dbReference type="DNASU" id="20202"/>
<dbReference type="Ensembl" id="ENSMUST00000069960.12">
    <property type="protein sequence ID" value="ENSMUSP00000070842.6"/>
    <property type="gene ID" value="ENSMUSG00000056071.13"/>
</dbReference>
<dbReference type="Ensembl" id="ENSMUST00000117167.2">
    <property type="protein sequence ID" value="ENSMUSP00000112843.2"/>
    <property type="gene ID" value="ENSMUSG00000056071.13"/>
</dbReference>
<dbReference type="GeneID" id="20202"/>
<dbReference type="KEGG" id="mmu:20202"/>
<dbReference type="UCSC" id="uc008qde.2">
    <property type="organism name" value="mouse"/>
</dbReference>
<dbReference type="AGR" id="MGI:1338947"/>
<dbReference type="CTD" id="6280"/>
<dbReference type="MGI" id="MGI:1338947">
    <property type="gene designation" value="S100a9"/>
</dbReference>
<dbReference type="VEuPathDB" id="HostDB:ENSMUSG00000056071"/>
<dbReference type="eggNOG" id="ENOG502SA01">
    <property type="taxonomic scope" value="Eukaryota"/>
</dbReference>
<dbReference type="GeneTree" id="ENSGT00940000161606"/>
<dbReference type="HOGENOM" id="CLU_138624_6_0_1"/>
<dbReference type="InParanoid" id="P31725"/>
<dbReference type="OMA" id="SQMECSI"/>
<dbReference type="OrthoDB" id="9447434at2759"/>
<dbReference type="PhylomeDB" id="P31725"/>
<dbReference type="TreeFam" id="TF332727"/>
<dbReference type="Reactome" id="R-MMU-5668599">
    <property type="pathway name" value="RHO GTPases Activate NADPH Oxidases"/>
</dbReference>
<dbReference type="Reactome" id="R-MMU-5686938">
    <property type="pathway name" value="Regulation of TLR by endogenous ligand"/>
</dbReference>
<dbReference type="Reactome" id="R-MMU-6798695">
    <property type="pathway name" value="Neutrophil degranulation"/>
</dbReference>
<dbReference type="Reactome" id="R-MMU-6799990">
    <property type="pathway name" value="Metal sequestration by antimicrobial proteins"/>
</dbReference>
<dbReference type="BioGRID-ORCS" id="20202">
    <property type="hits" value="1 hit in 76 CRISPR screens"/>
</dbReference>
<dbReference type="ChiTaRS" id="S100a9">
    <property type="organism name" value="mouse"/>
</dbReference>
<dbReference type="PRO" id="PR:P31725"/>
<dbReference type="Proteomes" id="UP000000589">
    <property type="component" value="Chromosome 3"/>
</dbReference>
<dbReference type="RNAct" id="P31725">
    <property type="molecule type" value="protein"/>
</dbReference>
<dbReference type="Bgee" id="ENSMUSG00000056071">
    <property type="expression patterns" value="Expressed in granulocyte and 150 other cell types or tissues"/>
</dbReference>
<dbReference type="ExpressionAtlas" id="P31725">
    <property type="expression patterns" value="baseline and differential"/>
</dbReference>
<dbReference type="GO" id="GO:1990660">
    <property type="term" value="C:calprotectin complex"/>
    <property type="evidence" value="ECO:0000266"/>
    <property type="project" value="ComplexPortal"/>
</dbReference>
<dbReference type="GO" id="GO:0001533">
    <property type="term" value="C:cornified envelope"/>
    <property type="evidence" value="ECO:0000314"/>
    <property type="project" value="MGI"/>
</dbReference>
<dbReference type="GO" id="GO:0005737">
    <property type="term" value="C:cytoplasm"/>
    <property type="evidence" value="ECO:0007669"/>
    <property type="project" value="UniProtKB-SubCell"/>
</dbReference>
<dbReference type="GO" id="GO:0005856">
    <property type="term" value="C:cytoskeleton"/>
    <property type="evidence" value="ECO:0007669"/>
    <property type="project" value="UniProtKB-SubCell"/>
</dbReference>
<dbReference type="GO" id="GO:0005576">
    <property type="term" value="C:extracellular region"/>
    <property type="evidence" value="ECO:0007669"/>
    <property type="project" value="UniProtKB-SubCell"/>
</dbReference>
<dbReference type="GO" id="GO:1990662">
    <property type="term" value="C:S100A9 complex"/>
    <property type="evidence" value="ECO:0000353"/>
    <property type="project" value="ComplexPortal"/>
</dbReference>
<dbReference type="GO" id="GO:0016209">
    <property type="term" value="F:antioxidant activity"/>
    <property type="evidence" value="ECO:0007669"/>
    <property type="project" value="UniProtKB-KW"/>
</dbReference>
<dbReference type="GO" id="GO:0005509">
    <property type="term" value="F:calcium ion binding"/>
    <property type="evidence" value="ECO:0007669"/>
    <property type="project" value="InterPro"/>
</dbReference>
<dbReference type="GO" id="GO:0030036">
    <property type="term" value="P:actin cytoskeleton organization"/>
    <property type="evidence" value="ECO:0000315"/>
    <property type="project" value="MGI"/>
</dbReference>
<dbReference type="GO" id="GO:0006915">
    <property type="term" value="P:apoptotic process"/>
    <property type="evidence" value="ECO:0007669"/>
    <property type="project" value="UniProtKB-KW"/>
</dbReference>
<dbReference type="GO" id="GO:0014002">
    <property type="term" value="P:astrocyte development"/>
    <property type="evidence" value="ECO:0000316"/>
    <property type="project" value="MGI"/>
</dbReference>
<dbReference type="GO" id="GO:0006914">
    <property type="term" value="P:autophagy"/>
    <property type="evidence" value="ECO:0000250"/>
    <property type="project" value="UniProtKB"/>
</dbReference>
<dbReference type="GO" id="GO:0045087">
    <property type="term" value="P:innate immune response"/>
    <property type="evidence" value="ECO:0007669"/>
    <property type="project" value="UniProtKB-KW"/>
</dbReference>
<dbReference type="GO" id="GO:0030595">
    <property type="term" value="P:leukocyte chemotaxis"/>
    <property type="evidence" value="ECO:0000315"/>
    <property type="project" value="MGI"/>
</dbReference>
<dbReference type="GO" id="GO:0002523">
    <property type="term" value="P:leukocyte migration involved in inflammatory response"/>
    <property type="evidence" value="ECO:0000250"/>
    <property type="project" value="UniProtKB"/>
</dbReference>
<dbReference type="GO" id="GO:0070488">
    <property type="term" value="P:neutrophil aggregation"/>
    <property type="evidence" value="ECO:0000250"/>
    <property type="project" value="UniProtKB"/>
</dbReference>
<dbReference type="GO" id="GO:0030593">
    <property type="term" value="P:neutrophil chemotaxis"/>
    <property type="evidence" value="ECO:0000250"/>
    <property type="project" value="UniProtKB"/>
</dbReference>
<dbReference type="GO" id="GO:0002790">
    <property type="term" value="P:peptide secretion"/>
    <property type="evidence" value="ECO:0000314"/>
    <property type="project" value="MGI"/>
</dbReference>
<dbReference type="GO" id="GO:0018119">
    <property type="term" value="P:peptidyl-cysteine S-nitrosylation"/>
    <property type="evidence" value="ECO:0000315"/>
    <property type="project" value="UniProtKB"/>
</dbReference>
<dbReference type="GO" id="GO:0030194">
    <property type="term" value="P:positive regulation of blood coagulation"/>
    <property type="evidence" value="ECO:0000315"/>
    <property type="project" value="CACAO"/>
</dbReference>
<dbReference type="GO" id="GO:0050729">
    <property type="term" value="P:positive regulation of inflammatory response"/>
    <property type="evidence" value="ECO:0000250"/>
    <property type="project" value="UniProtKB"/>
</dbReference>
<dbReference type="GO" id="GO:2001244">
    <property type="term" value="P:positive regulation of intrinsic apoptotic signaling pathway"/>
    <property type="evidence" value="ECO:0000250"/>
    <property type="project" value="UniProtKB"/>
</dbReference>
<dbReference type="GO" id="GO:0002793">
    <property type="term" value="P:positive regulation of peptide secretion"/>
    <property type="evidence" value="ECO:0000314"/>
    <property type="project" value="MGI"/>
</dbReference>
<dbReference type="GO" id="GO:0045113">
    <property type="term" value="P:regulation of integrin biosynthetic process"/>
    <property type="evidence" value="ECO:0000315"/>
    <property type="project" value="MGI"/>
</dbReference>
<dbReference type="GO" id="GO:0060264">
    <property type="term" value="P:regulation of respiratory burst involved in inflammatory response"/>
    <property type="evidence" value="ECO:0000303"/>
    <property type="project" value="ComplexPortal"/>
</dbReference>
<dbReference type="GO" id="GO:0034121">
    <property type="term" value="P:regulation of toll-like receptor signaling pathway"/>
    <property type="evidence" value="ECO:0000303"/>
    <property type="project" value="ComplexPortal"/>
</dbReference>
<dbReference type="GO" id="GO:0006417">
    <property type="term" value="P:regulation of translation"/>
    <property type="evidence" value="ECO:0000315"/>
    <property type="project" value="UniProtKB"/>
</dbReference>
<dbReference type="CDD" id="cd05030">
    <property type="entry name" value="calgranulins"/>
    <property type="match status" value="1"/>
</dbReference>
<dbReference type="Gene3D" id="1.10.238.10">
    <property type="entry name" value="EF-hand"/>
    <property type="match status" value="1"/>
</dbReference>
<dbReference type="InterPro" id="IPR011992">
    <property type="entry name" value="EF-hand-dom_pair"/>
</dbReference>
<dbReference type="InterPro" id="IPR002048">
    <property type="entry name" value="EF_hand_dom"/>
</dbReference>
<dbReference type="InterPro" id="IPR001751">
    <property type="entry name" value="S100/CaBP7/8-like_CS"/>
</dbReference>
<dbReference type="InterPro" id="IPR013787">
    <property type="entry name" value="S100_Ca-bd_sub"/>
</dbReference>
<dbReference type="PANTHER" id="PTHR11639:SF79">
    <property type="entry name" value="PROTEIN S100-A9"/>
    <property type="match status" value="1"/>
</dbReference>
<dbReference type="PANTHER" id="PTHR11639">
    <property type="entry name" value="S100 CALCIUM-BINDING PROTEIN"/>
    <property type="match status" value="1"/>
</dbReference>
<dbReference type="Pfam" id="PF01023">
    <property type="entry name" value="S_100"/>
    <property type="match status" value="1"/>
</dbReference>
<dbReference type="SMART" id="SM00054">
    <property type="entry name" value="EFh"/>
    <property type="match status" value="1"/>
</dbReference>
<dbReference type="SMART" id="SM01394">
    <property type="entry name" value="S_100"/>
    <property type="match status" value="1"/>
</dbReference>
<dbReference type="SUPFAM" id="SSF47473">
    <property type="entry name" value="EF-hand"/>
    <property type="match status" value="1"/>
</dbReference>
<dbReference type="PROSITE" id="PS50222">
    <property type="entry name" value="EF_HAND_2"/>
    <property type="match status" value="2"/>
</dbReference>
<dbReference type="PROSITE" id="PS00303">
    <property type="entry name" value="S100_CABP"/>
    <property type="match status" value="1"/>
</dbReference>
<name>S10A9_MOUSE</name>
<sequence>MANKAPSQMERSITTIIDTFHQYSRKEGHPDTLSKKEFRQMVEAQLATFMKKEKRNEALINDIMEDLDTNQDNQLSFEECMMLMAKLIFACHEKLHENNPRGHGHSHGKGCGK</sequence>
<protein>
    <recommendedName>
        <fullName>Protein S100-A9</fullName>
    </recommendedName>
    <alternativeName>
        <fullName>Calgranulin-B</fullName>
    </alternativeName>
    <alternativeName>
        <fullName>Leukocyte L1 complex heavy chain</fullName>
    </alternativeName>
    <alternativeName>
        <fullName>Migration inhibitory factor-related protein 14</fullName>
        <shortName>MRP-14</shortName>
        <shortName>p14</shortName>
    </alternativeName>
    <alternativeName>
        <fullName>S100 calcium-binding protein A9</fullName>
    </alternativeName>
</protein>
<evidence type="ECO:0000250" key="1">
    <source>
        <dbReference type="UniProtKB" id="P06702"/>
    </source>
</evidence>
<evidence type="ECO:0000255" key="2">
    <source>
        <dbReference type="PROSITE-ProRule" id="PRU00448"/>
    </source>
</evidence>
<evidence type="ECO:0000269" key="3">
    <source>
    </source>
</evidence>
<evidence type="ECO:0000269" key="4">
    <source>
    </source>
</evidence>
<evidence type="ECO:0000269" key="5">
    <source>
    </source>
</evidence>
<evidence type="ECO:0000269" key="6">
    <source>
    </source>
</evidence>
<evidence type="ECO:0000269" key="7">
    <source>
    </source>
</evidence>
<evidence type="ECO:0000269" key="8">
    <source>
    </source>
</evidence>
<evidence type="ECO:0000269" key="9">
    <source>
    </source>
</evidence>
<evidence type="ECO:0000269" key="10">
    <source>
    </source>
</evidence>
<evidence type="ECO:0000269" key="11">
    <source>
    </source>
</evidence>
<evidence type="ECO:0000269" key="12">
    <source>
    </source>
</evidence>
<evidence type="ECO:0000305" key="13"/>
<evidence type="ECO:0007744" key="14">
    <source>
        <dbReference type="PDB" id="7YF3"/>
    </source>
</evidence>
<evidence type="ECO:0007829" key="15">
    <source>
        <dbReference type="PDB" id="6ZDY"/>
    </source>
</evidence>